<name>ILVB1_ORYSJ</name>
<evidence type="ECO:0000250" key="1"/>
<evidence type="ECO:0000255" key="2"/>
<evidence type="ECO:0000256" key="3">
    <source>
        <dbReference type="SAM" id="MobiDB-lite"/>
    </source>
</evidence>
<evidence type="ECO:0000305" key="4"/>
<feature type="transit peptide" description="Chloroplast" evidence="2">
    <location>
        <begin position="1"/>
        <end position="43"/>
    </location>
</feature>
<feature type="chain" id="PRO_0000235809" description="Acetolactate synthase 1, chloroplastic">
    <location>
        <begin position="44"/>
        <end position="644"/>
    </location>
</feature>
<feature type="region of interest" description="Disordered" evidence="3">
    <location>
        <begin position="47"/>
        <end position="67"/>
    </location>
</feature>
<feature type="region of interest" description="Thiamine pyrophosphate binding" evidence="1">
    <location>
        <begin position="461"/>
        <end position="541"/>
    </location>
</feature>
<feature type="compositionally biased region" description="Pro residues" evidence="3">
    <location>
        <begin position="50"/>
        <end position="61"/>
    </location>
</feature>
<feature type="binding site" evidence="1">
    <location>
        <position position="118"/>
    </location>
    <ligand>
        <name>thiamine diphosphate</name>
        <dbReference type="ChEBI" id="CHEBI:58937"/>
    </ligand>
</feature>
<feature type="binding site" evidence="1">
    <location>
        <position position="220"/>
    </location>
    <ligand>
        <name>FAD</name>
        <dbReference type="ChEBI" id="CHEBI:57692"/>
    </ligand>
</feature>
<feature type="binding site" evidence="1">
    <location>
        <begin position="326"/>
        <end position="347"/>
    </location>
    <ligand>
        <name>FAD</name>
        <dbReference type="ChEBI" id="CHEBI:57692"/>
    </ligand>
</feature>
<feature type="binding site" evidence="1">
    <location>
        <begin position="369"/>
        <end position="388"/>
    </location>
    <ligand>
        <name>FAD</name>
        <dbReference type="ChEBI" id="CHEBI:57692"/>
    </ligand>
</feature>
<feature type="binding site" evidence="1">
    <location>
        <position position="512"/>
    </location>
    <ligand>
        <name>Mg(2+)</name>
        <dbReference type="ChEBI" id="CHEBI:18420"/>
    </ligand>
</feature>
<feature type="binding site" evidence="1">
    <location>
        <position position="539"/>
    </location>
    <ligand>
        <name>Mg(2+)</name>
        <dbReference type="ChEBI" id="CHEBI:18420"/>
    </ligand>
</feature>
<feature type="disulfide bond" evidence="1">
    <location>
        <begin position="138"/>
        <end position="284"/>
    </location>
</feature>
<feature type="sequence variant" description="In strain: cv. Bengal and cv. Strawhull.">
    <original>A</original>
    <variation>T</variation>
    <location>
        <position position="11"/>
    </location>
</feature>
<feature type="sequence variant" description="In strain: cv. Strawhull; resistant to imidazolinone and sulfonylurea herbicides; when associated with T-11; R-293; E-390; D-401; D-604; N-627 and P-636.">
    <original>S</original>
    <variation>P</variation>
    <location>
        <position position="160"/>
    </location>
</feature>
<feature type="sequence variant" description="In strain: cv. Bengal and cv. Strawhull.">
    <original>W</original>
    <variation>R</variation>
    <location>
        <position position="293"/>
    </location>
</feature>
<feature type="sequence variant" description="In strain: cv. Strawhull; resistant to imidazolinone and sulfonylurea herbicides; when associated with T-11; P-160; R-293; D-401, D-604; N-627 and P-636.">
    <original>K</original>
    <variation>E</variation>
    <location>
        <position position="390"/>
    </location>
</feature>
<feature type="sequence variant" description="In strain: cv. Bengal and cv. Strawhull.">
    <original>Q</original>
    <variation>D</variation>
    <location>
        <position position="401"/>
    </location>
</feature>
<feature type="sequence variant" description="In strain: cv. Japonica /Kinmaze; resistant to imidazolinone and sulfonylurea herbicides; when associated with I-627.">
    <original>W</original>
    <variation>L</variation>
    <location>
        <position position="548"/>
    </location>
</feature>
<feature type="sequence variant" description="In strain: cv. Strawhull.">
    <original>E</original>
    <variation>D</variation>
    <location>
        <position position="604"/>
    </location>
</feature>
<feature type="sequence variant" description="In strain: cv. Japonica /Kinmaze; resistant to imidazolinone and sulfonylurea herbicides; when associated with L-548.">
    <original>S</original>
    <variation>I</variation>
    <location>
        <position position="627"/>
    </location>
</feature>
<feature type="sequence variant" description="In strain: cv. Strawhull; resistant to imidazolinone and sulfonylurea herbicides; when associated with T-11; P-160; R-293; E-390; D-401; D-604 and P-636.">
    <original>S</original>
    <variation>N</variation>
    <location>
        <position position="627"/>
    </location>
</feature>
<feature type="sequence variant" description="In strain: cv. Strawhull; resistant to imidazolinone and sulfonylurea herbicides; when associated with T-11, P-160; R-293; E-390; D-401; D-604 and N-627.">
    <original>L</original>
    <variation>P</variation>
    <location>
        <position position="636"/>
    </location>
</feature>
<keyword id="KW-0028">Amino-acid biosynthesis</keyword>
<keyword id="KW-0100">Branched-chain amino acid biosynthesis</keyword>
<keyword id="KW-0150">Chloroplast</keyword>
<keyword id="KW-1015">Disulfide bond</keyword>
<keyword id="KW-0274">FAD</keyword>
<keyword id="KW-0285">Flavoprotein</keyword>
<keyword id="KW-0359">Herbicide resistance</keyword>
<keyword id="KW-0460">Magnesium</keyword>
<keyword id="KW-0479">Metal-binding</keyword>
<keyword id="KW-0934">Plastid</keyword>
<keyword id="KW-1185">Reference proteome</keyword>
<keyword id="KW-0786">Thiamine pyrophosphate</keyword>
<keyword id="KW-0808">Transferase</keyword>
<keyword id="KW-0809">Transit peptide</keyword>
<comment type="catalytic activity">
    <reaction>
        <text>2 pyruvate + H(+) = (2S)-2-acetolactate + CO2</text>
        <dbReference type="Rhea" id="RHEA:25249"/>
        <dbReference type="ChEBI" id="CHEBI:15361"/>
        <dbReference type="ChEBI" id="CHEBI:15378"/>
        <dbReference type="ChEBI" id="CHEBI:16526"/>
        <dbReference type="ChEBI" id="CHEBI:58476"/>
        <dbReference type="EC" id="2.2.1.6"/>
    </reaction>
</comment>
<comment type="cofactor">
    <cofactor evidence="1">
        <name>Mg(2+)</name>
        <dbReference type="ChEBI" id="CHEBI:18420"/>
    </cofactor>
    <text evidence="1">Binds 1 Mg(2+) ion per subunit.</text>
</comment>
<comment type="cofactor">
    <cofactor evidence="1">
        <name>thiamine diphosphate</name>
        <dbReference type="ChEBI" id="CHEBI:58937"/>
    </cofactor>
    <text evidence="1">Binds 1 thiamine pyrophosphate per subunit.</text>
</comment>
<comment type="pathway">
    <text>Amino-acid biosynthesis; L-isoleucine biosynthesis; L-isoleucine from 2-oxobutanoate: step 1/4.</text>
</comment>
<comment type="pathway">
    <text>Amino-acid biosynthesis; L-valine biosynthesis; L-valine from pyruvate: step 1/4.</text>
</comment>
<comment type="subcellular location">
    <subcellularLocation>
        <location evidence="1">Plastid</location>
        <location evidence="1">Chloroplast</location>
    </subcellularLocation>
</comment>
<comment type="miscellaneous">
    <text>Acetolactate synthase is the target enzyme for sulfonylurea and imidazolinone herbicides.</text>
</comment>
<comment type="similarity">
    <text evidence="4">Belongs to the TPP enzyme family.</text>
</comment>
<organism>
    <name type="scientific">Oryza sativa subsp. japonica</name>
    <name type="common">Rice</name>
    <dbReference type="NCBI Taxonomy" id="39947"/>
    <lineage>
        <taxon>Eukaryota</taxon>
        <taxon>Viridiplantae</taxon>
        <taxon>Streptophyta</taxon>
        <taxon>Embryophyta</taxon>
        <taxon>Tracheophyta</taxon>
        <taxon>Spermatophyta</taxon>
        <taxon>Magnoliopsida</taxon>
        <taxon>Liliopsida</taxon>
        <taxon>Poales</taxon>
        <taxon>Poaceae</taxon>
        <taxon>BOP clade</taxon>
        <taxon>Oryzoideae</taxon>
        <taxon>Oryzeae</taxon>
        <taxon>Oryzinae</taxon>
        <taxon>Oryza</taxon>
        <taxon>Oryza sativa</taxon>
    </lineage>
</organism>
<proteinExistence type="evidence at transcript level"/>
<protein>
    <recommendedName>
        <fullName>Acetolactate synthase 1, chloroplastic</fullName>
        <ecNumber>2.2.1.6</ecNumber>
    </recommendedName>
    <alternativeName>
        <fullName>Acetohydroxy-acid synthase 1</fullName>
    </alternativeName>
</protein>
<sequence>MATTAAAAAAALSAAATAKTGRKNHQRHHVLPARGRVGAAAVRCSAVSPVTPPSPAPPATPLRPWGPAEPRKGADILVEALERCGVSDVFAYPGGASMEIHQALTRSPVITNHLFRHEQGEAFAASGYARASGRVGVCVATSGPGATNLVSALADALLDSVPMVAITGQVPRRMIGTDAFQETPIVEVTRSITKHNYLVLDVEDIPRVIQEAFFLASSGRPGPVLVDIPKDIQQQMAVPVWDTSMNLPGYIARLPKPPATELLEQVLRLVGESRRPILYVGGGCSASGDELRWFVELTGIPVTTTLMGLGNFPSDDPLSLRMLGMHGTVYANYAVDKADLLLAFGVRFDDRVTGKIEAFASRAKIVHIDIDPAEIGKNKQPHVSICADVKLALQGLNALLQQSTTKTSSDFSAWHNELDQQKREFPLGYKTFGEEIPPQYAIQVLDELTKGEAIIATGVGQHQMWAAQYYTYKRPRQWLSSAGLGAMGFGLPAAAGASVANPGVTVVDIDGDGSFLMNIQELALIRIENLPVKVMVLNNQHLGMVVQWEDRFYKANRAHTYLGNPECESEIYPDFVTIAKGFNIPAVRVTKKSEVRAAIKKMLETPGPYLLDIIVPHQEHVLPMIPSGGAFKDMILDGDGRTVY</sequence>
<gene>
    <name type="primary">ALS1</name>
    <name type="ordered locus">Os02g0510200</name>
    <name type="ordered locus">LOC_Os02g30630</name>
    <name type="ORF">OSJNBa0052M16.38</name>
</gene>
<accession>Q6K2E8</accession>
<accession>Q5D6B1</accession>
<accession>Q5D6B2</accession>
<accession>Q5D6B3</accession>
<accession>Q9FRV2</accession>
<accession>Q9FRV3</accession>
<dbReference type="EC" id="2.2.1.6"/>
<dbReference type="EMBL" id="AB049822">
    <property type="protein sequence ID" value="BAB20812.1"/>
    <property type="molecule type" value="mRNA"/>
</dbReference>
<dbReference type="EMBL" id="AB049823">
    <property type="protein sequence ID" value="BAB20813.1"/>
    <property type="molecule type" value="mRNA"/>
</dbReference>
<dbReference type="EMBL" id="AY885674">
    <property type="protein sequence ID" value="AAX14282.1"/>
    <property type="molecule type" value="Genomic_DNA"/>
</dbReference>
<dbReference type="EMBL" id="AY885673">
    <property type="protein sequence ID" value="AAX14281.1"/>
    <property type="molecule type" value="Genomic_DNA"/>
</dbReference>
<dbReference type="EMBL" id="AY885675">
    <property type="protein sequence ID" value="AAX14283.1"/>
    <property type="molecule type" value="Genomic_DNA"/>
</dbReference>
<dbReference type="EMBL" id="AP005841">
    <property type="protein sequence ID" value="BAD23668.1"/>
    <property type="molecule type" value="Genomic_DNA"/>
</dbReference>
<dbReference type="EMBL" id="AP014958">
    <property type="status" value="NOT_ANNOTATED_CDS"/>
    <property type="molecule type" value="Genomic_DNA"/>
</dbReference>
<dbReference type="RefSeq" id="XP_015626459.1">
    <property type="nucleotide sequence ID" value="XM_015770973.1"/>
</dbReference>
<dbReference type="SMR" id="Q6K2E8"/>
<dbReference type="BioGRID" id="798487">
    <property type="interactions" value="1"/>
</dbReference>
<dbReference type="FunCoup" id="Q6K2E8">
    <property type="interactions" value="1095"/>
</dbReference>
<dbReference type="STRING" id="39947.Q6K2E8"/>
<dbReference type="PaxDb" id="39947-Q6K2E8"/>
<dbReference type="EnsemblPlants" id="Os02t0510200-01">
    <property type="protein sequence ID" value="Os02t0510200-01"/>
    <property type="gene ID" value="Os02g0510200"/>
</dbReference>
<dbReference type="Gramene" id="Os02t0510200-01">
    <property type="protein sequence ID" value="Os02t0510200-01"/>
    <property type="gene ID" value="Os02g0510200"/>
</dbReference>
<dbReference type="eggNOG" id="KOG4166">
    <property type="taxonomic scope" value="Eukaryota"/>
</dbReference>
<dbReference type="InParanoid" id="Q6K2E8"/>
<dbReference type="OrthoDB" id="16262at2759"/>
<dbReference type="BRENDA" id="2.2.1.6">
    <property type="organism ID" value="4460"/>
</dbReference>
<dbReference type="PlantReactome" id="R-OSA-1119460">
    <property type="pathway name" value="Isoleucine biosynthesis from threonine"/>
</dbReference>
<dbReference type="PlantReactome" id="R-OSA-1119600">
    <property type="pathway name" value="Valine biosynthesis"/>
</dbReference>
<dbReference type="UniPathway" id="UPA00047">
    <property type="reaction ID" value="UER00055"/>
</dbReference>
<dbReference type="UniPathway" id="UPA00049">
    <property type="reaction ID" value="UER00059"/>
</dbReference>
<dbReference type="Proteomes" id="UP000000763">
    <property type="component" value="Chromosome 2"/>
</dbReference>
<dbReference type="Proteomes" id="UP000059680">
    <property type="component" value="Chromosome 2"/>
</dbReference>
<dbReference type="ExpressionAtlas" id="Q6K2E8">
    <property type="expression patterns" value="baseline and differential"/>
</dbReference>
<dbReference type="GO" id="GO:0005948">
    <property type="term" value="C:acetolactate synthase complex"/>
    <property type="evidence" value="ECO:0000318"/>
    <property type="project" value="GO_Central"/>
</dbReference>
<dbReference type="GO" id="GO:0009507">
    <property type="term" value="C:chloroplast"/>
    <property type="evidence" value="ECO:0007669"/>
    <property type="project" value="UniProtKB-SubCell"/>
</dbReference>
<dbReference type="GO" id="GO:0003984">
    <property type="term" value="F:acetolactate synthase activity"/>
    <property type="evidence" value="ECO:0000318"/>
    <property type="project" value="GO_Central"/>
</dbReference>
<dbReference type="GO" id="GO:0050660">
    <property type="term" value="F:flavin adenine dinucleotide binding"/>
    <property type="evidence" value="ECO:0000318"/>
    <property type="project" value="GO_Central"/>
</dbReference>
<dbReference type="GO" id="GO:0000287">
    <property type="term" value="F:magnesium ion binding"/>
    <property type="evidence" value="ECO:0007669"/>
    <property type="project" value="InterPro"/>
</dbReference>
<dbReference type="GO" id="GO:0030976">
    <property type="term" value="F:thiamine pyrophosphate binding"/>
    <property type="evidence" value="ECO:0007669"/>
    <property type="project" value="InterPro"/>
</dbReference>
<dbReference type="GO" id="GO:0009097">
    <property type="term" value="P:isoleucine biosynthetic process"/>
    <property type="evidence" value="ECO:0000318"/>
    <property type="project" value="GO_Central"/>
</dbReference>
<dbReference type="GO" id="GO:0009099">
    <property type="term" value="P:L-valine biosynthetic process"/>
    <property type="evidence" value="ECO:0000318"/>
    <property type="project" value="GO_Central"/>
</dbReference>
<dbReference type="GO" id="GO:0009635">
    <property type="term" value="P:response to herbicide"/>
    <property type="evidence" value="ECO:0007669"/>
    <property type="project" value="UniProtKB-KW"/>
</dbReference>
<dbReference type="CDD" id="cd02015">
    <property type="entry name" value="TPP_AHAS"/>
    <property type="match status" value="1"/>
</dbReference>
<dbReference type="CDD" id="cd07035">
    <property type="entry name" value="TPP_PYR_POX_like"/>
    <property type="match status" value="1"/>
</dbReference>
<dbReference type="FunFam" id="3.40.50.1220:FF:000008">
    <property type="entry name" value="Acetolactate synthase"/>
    <property type="match status" value="1"/>
</dbReference>
<dbReference type="FunFam" id="3.40.50.970:FF:000007">
    <property type="entry name" value="Acetolactate synthase"/>
    <property type="match status" value="1"/>
</dbReference>
<dbReference type="FunFam" id="3.40.50.970:FF:000016">
    <property type="entry name" value="Acetolactate synthase"/>
    <property type="match status" value="1"/>
</dbReference>
<dbReference type="Gene3D" id="3.40.50.970">
    <property type="match status" value="2"/>
</dbReference>
<dbReference type="Gene3D" id="3.40.50.1220">
    <property type="entry name" value="TPP-binding domain"/>
    <property type="match status" value="1"/>
</dbReference>
<dbReference type="InterPro" id="IPR012846">
    <property type="entry name" value="Acetolactate_synth_lsu"/>
</dbReference>
<dbReference type="InterPro" id="IPR039368">
    <property type="entry name" value="AHAS_TPP"/>
</dbReference>
<dbReference type="InterPro" id="IPR029035">
    <property type="entry name" value="DHS-like_NAD/FAD-binding_dom"/>
</dbReference>
<dbReference type="InterPro" id="IPR029061">
    <property type="entry name" value="THDP-binding"/>
</dbReference>
<dbReference type="InterPro" id="IPR012000">
    <property type="entry name" value="Thiamin_PyroP_enz_cen_dom"/>
</dbReference>
<dbReference type="InterPro" id="IPR012001">
    <property type="entry name" value="Thiamin_PyroP_enz_TPP-bd_dom"/>
</dbReference>
<dbReference type="InterPro" id="IPR045229">
    <property type="entry name" value="TPP_enz"/>
</dbReference>
<dbReference type="InterPro" id="IPR011766">
    <property type="entry name" value="TPP_enzyme_TPP-bd"/>
</dbReference>
<dbReference type="NCBIfam" id="TIGR00118">
    <property type="entry name" value="acolac_lg"/>
    <property type="match status" value="1"/>
</dbReference>
<dbReference type="PANTHER" id="PTHR18968:SF13">
    <property type="entry name" value="ACETOLACTATE SYNTHASE CATALYTIC SUBUNIT, MITOCHONDRIAL"/>
    <property type="match status" value="1"/>
</dbReference>
<dbReference type="PANTHER" id="PTHR18968">
    <property type="entry name" value="THIAMINE PYROPHOSPHATE ENZYMES"/>
    <property type="match status" value="1"/>
</dbReference>
<dbReference type="Pfam" id="PF02775">
    <property type="entry name" value="TPP_enzyme_C"/>
    <property type="match status" value="1"/>
</dbReference>
<dbReference type="Pfam" id="PF00205">
    <property type="entry name" value="TPP_enzyme_M"/>
    <property type="match status" value="1"/>
</dbReference>
<dbReference type="Pfam" id="PF02776">
    <property type="entry name" value="TPP_enzyme_N"/>
    <property type="match status" value="1"/>
</dbReference>
<dbReference type="SUPFAM" id="SSF52467">
    <property type="entry name" value="DHS-like NAD/FAD-binding domain"/>
    <property type="match status" value="1"/>
</dbReference>
<dbReference type="SUPFAM" id="SSF52518">
    <property type="entry name" value="Thiamin diphosphate-binding fold (THDP-binding)"/>
    <property type="match status" value="2"/>
</dbReference>
<reference key="1">
    <citation type="submission" date="2000-10" db="EMBL/GenBank/DDBJ databases">
        <title>Isolation and Expression of acetolactate synthase genes from Oryza sativa.</title>
        <authorList>
            <person name="Shimizu T."/>
            <person name="Kato Y."/>
            <person name="Nakayama I."/>
            <person name="Nakayama K."/>
            <person name="Fukuda A."/>
            <person name="Tanaka Y."/>
        </authorList>
    </citation>
    <scope>NUCLEOTIDE SEQUENCE [MRNA]</scope>
    <source>
        <strain>cv. Kinmaze</strain>
    </source>
</reference>
<reference key="2">
    <citation type="journal article" date="2005" name="Weed Sci.">
        <title>Mutations in the red rice ALS gene associated with resistance to imazethapyr.</title>
        <authorList>
            <person name="Rajguru S.N."/>
            <person name="Burgos N.R."/>
            <person name="Shivrain V.K."/>
            <person name="Stewart J.M."/>
        </authorList>
        <dbReference type="AGRICOLA" id="IND43755071"/>
    </citation>
    <scope>NUCLEOTIDE SEQUENCE [GENOMIC DNA]</scope>
    <source>
        <strain>cv. Bengal</strain>
        <strain>cv. Strawhull</strain>
    </source>
</reference>
<reference key="3">
    <citation type="journal article" date="2005" name="Nature">
        <title>The map-based sequence of the rice genome.</title>
        <authorList>
            <consortium name="International rice genome sequencing project (IRGSP)"/>
        </authorList>
    </citation>
    <scope>NUCLEOTIDE SEQUENCE [LARGE SCALE GENOMIC DNA]</scope>
    <source>
        <strain>cv. Nipponbare</strain>
    </source>
</reference>
<reference key="4">
    <citation type="journal article" date="2013" name="Rice">
        <title>Improvement of the Oryza sativa Nipponbare reference genome using next generation sequence and optical map data.</title>
        <authorList>
            <person name="Kawahara Y."/>
            <person name="de la Bastide M."/>
            <person name="Hamilton J.P."/>
            <person name="Kanamori H."/>
            <person name="McCombie W.R."/>
            <person name="Ouyang S."/>
            <person name="Schwartz D.C."/>
            <person name="Tanaka T."/>
            <person name="Wu J."/>
            <person name="Zhou S."/>
            <person name="Childs K.L."/>
            <person name="Davidson R.M."/>
            <person name="Lin H."/>
            <person name="Quesada-Ocampo L."/>
            <person name="Vaillancourt B."/>
            <person name="Sakai H."/>
            <person name="Lee S.S."/>
            <person name="Kim J."/>
            <person name="Numa H."/>
            <person name="Itoh T."/>
            <person name="Buell C.R."/>
            <person name="Matsumoto T."/>
        </authorList>
    </citation>
    <scope>GENOME REANNOTATION</scope>
    <source>
        <strain>cv. Nipponbare</strain>
    </source>
</reference>